<dbReference type="EC" id="3.1.13.1" evidence="2"/>
<dbReference type="EMBL" id="CU928163">
    <property type="protein sequence ID" value="CAR12796.1"/>
    <property type="molecule type" value="Genomic_DNA"/>
</dbReference>
<dbReference type="RefSeq" id="WP_000485008.1">
    <property type="nucleotide sequence ID" value="NC_011751.1"/>
</dbReference>
<dbReference type="RefSeq" id="YP_002412333.1">
    <property type="nucleotide sequence ID" value="NC_011751.1"/>
</dbReference>
<dbReference type="SMR" id="B7N4A3"/>
<dbReference type="STRING" id="585056.ECUMN_1590"/>
<dbReference type="KEGG" id="eum:ECUMN_1590"/>
<dbReference type="PATRIC" id="fig|585056.7.peg.1784"/>
<dbReference type="HOGENOM" id="CLU_002333_7_3_6"/>
<dbReference type="Proteomes" id="UP000007097">
    <property type="component" value="Chromosome"/>
</dbReference>
<dbReference type="GO" id="GO:0005829">
    <property type="term" value="C:cytosol"/>
    <property type="evidence" value="ECO:0007669"/>
    <property type="project" value="TreeGrafter"/>
</dbReference>
<dbReference type="GO" id="GO:0008859">
    <property type="term" value="F:exoribonuclease II activity"/>
    <property type="evidence" value="ECO:0007669"/>
    <property type="project" value="UniProtKB-UniRule"/>
</dbReference>
<dbReference type="GO" id="GO:0003723">
    <property type="term" value="F:RNA binding"/>
    <property type="evidence" value="ECO:0007669"/>
    <property type="project" value="UniProtKB-KW"/>
</dbReference>
<dbReference type="GO" id="GO:0006402">
    <property type="term" value="P:mRNA catabolic process"/>
    <property type="evidence" value="ECO:0007669"/>
    <property type="project" value="UniProtKB-UniRule"/>
</dbReference>
<dbReference type="FunFam" id="2.40.50.140:FF:000079">
    <property type="entry name" value="Exoribonuclease 2"/>
    <property type="match status" value="1"/>
</dbReference>
<dbReference type="FunFam" id="2.40.50.140:FF:000081">
    <property type="entry name" value="Exoribonuclease 2"/>
    <property type="match status" value="1"/>
</dbReference>
<dbReference type="FunFam" id="2.40.50.640:FF:000001">
    <property type="entry name" value="Exoribonuclease 2"/>
    <property type="match status" value="1"/>
</dbReference>
<dbReference type="Gene3D" id="2.40.50.640">
    <property type="match status" value="1"/>
</dbReference>
<dbReference type="Gene3D" id="2.40.50.140">
    <property type="entry name" value="Nucleic acid-binding proteins"/>
    <property type="match status" value="2"/>
</dbReference>
<dbReference type="HAMAP" id="MF_01036">
    <property type="entry name" value="RNase_II"/>
    <property type="match status" value="1"/>
</dbReference>
<dbReference type="InterPro" id="IPR011129">
    <property type="entry name" value="CSD"/>
</dbReference>
<dbReference type="InterPro" id="IPR012340">
    <property type="entry name" value="NA-bd_OB-fold"/>
</dbReference>
<dbReference type="InterPro" id="IPR013223">
    <property type="entry name" value="RNase_B_OB_dom"/>
</dbReference>
<dbReference type="InterPro" id="IPR011804">
    <property type="entry name" value="RNase_II"/>
</dbReference>
<dbReference type="InterPro" id="IPR001900">
    <property type="entry name" value="RNase_II/R"/>
</dbReference>
<dbReference type="InterPro" id="IPR022966">
    <property type="entry name" value="RNase_II/R_CS"/>
</dbReference>
<dbReference type="InterPro" id="IPR004476">
    <property type="entry name" value="RNase_II/RNase_R"/>
</dbReference>
<dbReference type="InterPro" id="IPR050180">
    <property type="entry name" value="RNR_Ribonuclease"/>
</dbReference>
<dbReference type="InterPro" id="IPR003029">
    <property type="entry name" value="S1_domain"/>
</dbReference>
<dbReference type="NCBIfam" id="TIGR00358">
    <property type="entry name" value="3_prime_RNase"/>
    <property type="match status" value="1"/>
</dbReference>
<dbReference type="NCBIfam" id="NF003455">
    <property type="entry name" value="PRK05054.1"/>
    <property type="match status" value="1"/>
</dbReference>
<dbReference type="NCBIfam" id="TIGR02062">
    <property type="entry name" value="RNase_B"/>
    <property type="match status" value="1"/>
</dbReference>
<dbReference type="PANTHER" id="PTHR23355:SF37">
    <property type="entry name" value="EXORIBONUCLEASE 2"/>
    <property type="match status" value="1"/>
</dbReference>
<dbReference type="PANTHER" id="PTHR23355">
    <property type="entry name" value="RIBONUCLEASE"/>
    <property type="match status" value="1"/>
</dbReference>
<dbReference type="Pfam" id="PF08206">
    <property type="entry name" value="OB_RNB"/>
    <property type="match status" value="1"/>
</dbReference>
<dbReference type="Pfam" id="PF00773">
    <property type="entry name" value="RNB"/>
    <property type="match status" value="1"/>
</dbReference>
<dbReference type="Pfam" id="PF00575">
    <property type="entry name" value="S1"/>
    <property type="match status" value="1"/>
</dbReference>
<dbReference type="SMART" id="SM00357">
    <property type="entry name" value="CSP"/>
    <property type="match status" value="1"/>
</dbReference>
<dbReference type="SMART" id="SM00955">
    <property type="entry name" value="RNB"/>
    <property type="match status" value="1"/>
</dbReference>
<dbReference type="SUPFAM" id="SSF50249">
    <property type="entry name" value="Nucleic acid-binding proteins"/>
    <property type="match status" value="4"/>
</dbReference>
<dbReference type="PROSITE" id="PS01175">
    <property type="entry name" value="RIBONUCLEASE_II"/>
    <property type="match status" value="1"/>
</dbReference>
<proteinExistence type="inferred from homology"/>
<reference key="1">
    <citation type="journal article" date="2009" name="PLoS Genet.">
        <title>Organised genome dynamics in the Escherichia coli species results in highly diverse adaptive paths.</title>
        <authorList>
            <person name="Touchon M."/>
            <person name="Hoede C."/>
            <person name="Tenaillon O."/>
            <person name="Barbe V."/>
            <person name="Baeriswyl S."/>
            <person name="Bidet P."/>
            <person name="Bingen E."/>
            <person name="Bonacorsi S."/>
            <person name="Bouchier C."/>
            <person name="Bouvet O."/>
            <person name="Calteau A."/>
            <person name="Chiapello H."/>
            <person name="Clermont O."/>
            <person name="Cruveiller S."/>
            <person name="Danchin A."/>
            <person name="Diard M."/>
            <person name="Dossat C."/>
            <person name="Karoui M.E."/>
            <person name="Frapy E."/>
            <person name="Garry L."/>
            <person name="Ghigo J.M."/>
            <person name="Gilles A.M."/>
            <person name="Johnson J."/>
            <person name="Le Bouguenec C."/>
            <person name="Lescat M."/>
            <person name="Mangenot S."/>
            <person name="Martinez-Jehanne V."/>
            <person name="Matic I."/>
            <person name="Nassif X."/>
            <person name="Oztas S."/>
            <person name="Petit M.A."/>
            <person name="Pichon C."/>
            <person name="Rouy Z."/>
            <person name="Ruf C.S."/>
            <person name="Schneider D."/>
            <person name="Tourret J."/>
            <person name="Vacherie B."/>
            <person name="Vallenet D."/>
            <person name="Medigue C."/>
            <person name="Rocha E.P.C."/>
            <person name="Denamur E."/>
        </authorList>
    </citation>
    <scope>NUCLEOTIDE SEQUENCE [LARGE SCALE GENOMIC DNA]</scope>
    <source>
        <strain>UMN026 / ExPEC</strain>
    </source>
</reference>
<evidence type="ECO:0000255" key="1"/>
<evidence type="ECO:0000255" key="2">
    <source>
        <dbReference type="HAMAP-Rule" id="MF_01036"/>
    </source>
</evidence>
<sequence length="644" mass="72405">MFQDNPLLAQLKQQLHSQTPRAEGVVKATEKGFGFLEVDAQKSYFIPPPQMKKVMHGDRIIAVIHSEKERESAEPEELVEPFLTRFVGKVQGKNDRLAIVPDHPLLKDAIPCRAARGLNHEFKEGDWAVAEMRRHPLKGDRSFYAELTQYITFGDDHFVPWWVTLARHNLEKEAPDGVATEMLDEGLVREDLTALDFVTIDSASTEDMDDALFAKALPDGKLQLIVAIADPTAWIAEGSKLDKAAKIRAFTNYLPGFNIPMLPRELSDDLCSLRANEVRPVLACRMTLSADGTIEDNIEFFAATIESKAKLVYDQVSDWLENTGDWQPESEAIAEQVRLLAQICQRRGEWRHNHALVFKDRPDYRFILGEKGEVLDIVAEPRRIANRIVEEAMIAANICAARVLRDKLGFGIYNVHMGFDPANADALAALLKTHGLHVDAEEVLTLDGFCKLRRELDAQPTGFLDSRIRRFQSFAEISTEPGPHFGLGLEAYATWTSPIRKYGDMINHRLLKAVIKGETATRPQDEITVQMAERRRLNRMAERDVGDWLYARFLKDKAGTDTRFAAEIVDISRGGMRVRLVDNGAIAFIPAPFLHAVRDELVCSQENGTVQIKGETAYKVTDVIDVTIAEVRMETRSIIARPVA</sequence>
<organism>
    <name type="scientific">Escherichia coli O17:K52:H18 (strain UMN026 / ExPEC)</name>
    <dbReference type="NCBI Taxonomy" id="585056"/>
    <lineage>
        <taxon>Bacteria</taxon>
        <taxon>Pseudomonadati</taxon>
        <taxon>Pseudomonadota</taxon>
        <taxon>Gammaproteobacteria</taxon>
        <taxon>Enterobacterales</taxon>
        <taxon>Enterobacteriaceae</taxon>
        <taxon>Escherichia</taxon>
    </lineage>
</organism>
<accession>B7N4A3</accession>
<name>RNB_ECOLU</name>
<feature type="chain" id="PRO_1000135866" description="Exoribonuclease 2">
    <location>
        <begin position="1"/>
        <end position="644"/>
    </location>
</feature>
<feature type="domain" description="RNB" evidence="1">
    <location>
        <begin position="189"/>
        <end position="516"/>
    </location>
</feature>
<feature type="domain" description="S1 motif" evidence="2">
    <location>
        <begin position="561"/>
        <end position="643"/>
    </location>
</feature>
<comment type="function">
    <text evidence="2">Involved in mRNA degradation. Hydrolyzes single-stranded polyribonucleotides processively in the 3' to 5' direction.</text>
</comment>
<comment type="catalytic activity">
    <reaction evidence="2">
        <text>Exonucleolytic cleavage in the 3'- to 5'-direction to yield nucleoside 5'-phosphates.</text>
        <dbReference type="EC" id="3.1.13.1"/>
    </reaction>
</comment>
<comment type="subcellular location">
    <subcellularLocation>
        <location evidence="2">Cytoplasm</location>
    </subcellularLocation>
</comment>
<comment type="similarity">
    <text evidence="2">Belongs to the RNR ribonuclease family. RNase II subfamily.</text>
</comment>
<protein>
    <recommendedName>
        <fullName evidence="2">Exoribonuclease 2</fullName>
        <ecNumber evidence="2">3.1.13.1</ecNumber>
    </recommendedName>
    <alternativeName>
        <fullName evidence="2">Exoribonuclease II</fullName>
        <shortName evidence="2">RNase II</shortName>
        <shortName evidence="2">Ribonuclease II</shortName>
    </alternativeName>
</protein>
<gene>
    <name evidence="2" type="primary">rnb</name>
    <name type="ordered locus">ECUMN_1590</name>
</gene>
<keyword id="KW-0963">Cytoplasm</keyword>
<keyword id="KW-0269">Exonuclease</keyword>
<keyword id="KW-0378">Hydrolase</keyword>
<keyword id="KW-0540">Nuclease</keyword>
<keyword id="KW-0694">RNA-binding</keyword>